<comment type="catalytic activity">
    <reaction>
        <text>UDP-alpha-D-glucose = UDP-alpha-D-galactose</text>
        <dbReference type="Rhea" id="RHEA:22168"/>
        <dbReference type="ChEBI" id="CHEBI:58885"/>
        <dbReference type="ChEBI" id="CHEBI:66914"/>
        <dbReference type="EC" id="5.1.3.2"/>
    </reaction>
</comment>
<comment type="cofactor">
    <cofactor evidence="1">
        <name>NAD(+)</name>
        <dbReference type="ChEBI" id="CHEBI:57540"/>
    </cofactor>
</comment>
<comment type="pathway">
    <text>Carbohydrate metabolism; galactose metabolism.</text>
</comment>
<comment type="similarity">
    <text evidence="2">Belongs to the NAD(P)-dependent epimerase/dehydratase family.</text>
</comment>
<accession>O65781</accession>
<feature type="chain" id="PRO_0000183197" description="UDP-glucose 4-epimerase GEPI48">
    <location>
        <begin position="1"/>
        <end position="350"/>
    </location>
</feature>
<feature type="active site" description="Proton acceptor" evidence="1">
    <location>
        <position position="154"/>
    </location>
</feature>
<feature type="binding site" evidence="1">
    <location>
        <begin position="5"/>
        <end position="36"/>
    </location>
    <ligand>
        <name>NAD(+)</name>
        <dbReference type="ChEBI" id="CHEBI:57540"/>
    </ligand>
</feature>
<feature type="binding site" evidence="1">
    <location>
        <position position="130"/>
    </location>
    <ligand>
        <name>substrate</name>
    </ligand>
</feature>
<sequence>MSSQTVLVTGGAGYIGSHTVLQLLLGGFKAVVVDNLDNSSETAIHRVKELAGKFAGNLSFHKLDLRDRDALEKIFSSTKFDSVIHFAGLKAVGESVQKPLLYYDNNLIGTIVLFEVMAAHGCKKLVFSSSATVYGLPKEVPCTEEFPLSAANPYGRTKLIIEEICRDIYRAEQEWKIILLRYFNPVGAHPSGYIGEDPRGIPNNLMPFVQQVAVGRRPALTVFGNDYTTSDGTGVRDYIHVVDLADGHIAALRKLNDPKIGCEVYNLGTGKGTSVLEMVKAFEQASGKKIPLVMAGRRPGDAEVVYASTNKAERELNWKAKYGIDEMCRDQWNWASKNPYGYGGSEDSSN</sequence>
<reference key="1">
    <citation type="submission" date="1998-03" db="EMBL/GenBank/DDBJ databases">
        <title>Isolation and expression of two cDNA clones encoding UDP-galactose epimerase genes expressed in guar endosperm.</title>
        <authorList>
            <person name="Brunstedt J."/>
            <person name="Joersbo M."/>
            <person name="Pedersen S.G."/>
            <person name="Marcussen J."/>
        </authorList>
    </citation>
    <scope>NUCLEOTIDE SEQUENCE [MRNA]</scope>
</reference>
<evidence type="ECO:0000250" key="1"/>
<evidence type="ECO:0000305" key="2"/>
<keyword id="KW-0119">Carbohydrate metabolism</keyword>
<keyword id="KW-0299">Galactose metabolism</keyword>
<keyword id="KW-0413">Isomerase</keyword>
<keyword id="KW-0520">NAD</keyword>
<proteinExistence type="evidence at transcript level"/>
<name>GALE2_CYATE</name>
<protein>
    <recommendedName>
        <fullName>UDP-glucose 4-epimerase GEPI48</fullName>
        <ecNumber>5.1.3.2</ecNumber>
    </recommendedName>
    <alternativeName>
        <fullName>Galactowaldenase</fullName>
    </alternativeName>
    <alternativeName>
        <fullName>UDP-galactose 4-epimerase</fullName>
    </alternativeName>
</protein>
<dbReference type="EC" id="5.1.3.2"/>
<dbReference type="EMBL" id="AJ005082">
    <property type="protein sequence ID" value="CAA06339.1"/>
    <property type="molecule type" value="mRNA"/>
</dbReference>
<dbReference type="PIR" id="T10498">
    <property type="entry name" value="T10498"/>
</dbReference>
<dbReference type="SMR" id="O65781"/>
<dbReference type="UniPathway" id="UPA00214"/>
<dbReference type="GO" id="GO:0005829">
    <property type="term" value="C:cytosol"/>
    <property type="evidence" value="ECO:0007669"/>
    <property type="project" value="TreeGrafter"/>
</dbReference>
<dbReference type="GO" id="GO:0003978">
    <property type="term" value="F:UDP-glucose 4-epimerase activity"/>
    <property type="evidence" value="ECO:0007669"/>
    <property type="project" value="UniProtKB-EC"/>
</dbReference>
<dbReference type="GO" id="GO:0006012">
    <property type="term" value="P:galactose metabolic process"/>
    <property type="evidence" value="ECO:0007669"/>
    <property type="project" value="UniProtKB-UniPathway"/>
</dbReference>
<dbReference type="CDD" id="cd05247">
    <property type="entry name" value="UDP_G4E_1_SDR_e"/>
    <property type="match status" value="1"/>
</dbReference>
<dbReference type="FunFam" id="3.40.50.720:FF:000040">
    <property type="entry name" value="UDP-glucose 4-epimerase"/>
    <property type="match status" value="1"/>
</dbReference>
<dbReference type="FunFam" id="3.90.25.10:FF:000060">
    <property type="entry name" value="UDP-glucose 4-epimerase 4"/>
    <property type="match status" value="1"/>
</dbReference>
<dbReference type="Gene3D" id="3.40.50.720">
    <property type="entry name" value="NAD(P)-binding Rossmann-like Domain"/>
    <property type="match status" value="1"/>
</dbReference>
<dbReference type="Gene3D" id="3.90.25.10">
    <property type="entry name" value="UDP-galactose 4-epimerase, domain 1"/>
    <property type="match status" value="1"/>
</dbReference>
<dbReference type="InterPro" id="IPR016040">
    <property type="entry name" value="NAD(P)-bd_dom"/>
</dbReference>
<dbReference type="InterPro" id="IPR036291">
    <property type="entry name" value="NAD(P)-bd_dom_sf"/>
</dbReference>
<dbReference type="InterPro" id="IPR005886">
    <property type="entry name" value="UDP_G4E"/>
</dbReference>
<dbReference type="NCBIfam" id="TIGR01179">
    <property type="entry name" value="galE"/>
    <property type="match status" value="1"/>
</dbReference>
<dbReference type="NCBIfam" id="NF007956">
    <property type="entry name" value="PRK10675.1"/>
    <property type="match status" value="1"/>
</dbReference>
<dbReference type="PANTHER" id="PTHR43725">
    <property type="entry name" value="UDP-GLUCOSE 4-EPIMERASE"/>
    <property type="match status" value="1"/>
</dbReference>
<dbReference type="PANTHER" id="PTHR43725:SF49">
    <property type="entry name" value="UDP-GLUCOSE 4-EPIMERASE"/>
    <property type="match status" value="1"/>
</dbReference>
<dbReference type="Pfam" id="PF16363">
    <property type="entry name" value="GDP_Man_Dehyd"/>
    <property type="match status" value="1"/>
</dbReference>
<dbReference type="SUPFAM" id="SSF51735">
    <property type="entry name" value="NAD(P)-binding Rossmann-fold domains"/>
    <property type="match status" value="1"/>
</dbReference>
<organism>
    <name type="scientific">Cyamopsis tetragonoloba</name>
    <name type="common">Guar</name>
    <name type="synonym">Cluster bean</name>
    <dbReference type="NCBI Taxonomy" id="3832"/>
    <lineage>
        <taxon>Eukaryota</taxon>
        <taxon>Viridiplantae</taxon>
        <taxon>Streptophyta</taxon>
        <taxon>Embryophyta</taxon>
        <taxon>Tracheophyta</taxon>
        <taxon>Spermatophyta</taxon>
        <taxon>Magnoliopsida</taxon>
        <taxon>eudicotyledons</taxon>
        <taxon>Gunneridae</taxon>
        <taxon>Pentapetalae</taxon>
        <taxon>rosids</taxon>
        <taxon>fabids</taxon>
        <taxon>Fabales</taxon>
        <taxon>Fabaceae</taxon>
        <taxon>Papilionoideae</taxon>
        <taxon>50 kb inversion clade</taxon>
        <taxon>NPAAA clade</taxon>
        <taxon>indigoferoid/millettioid clade</taxon>
        <taxon>Indigofereae</taxon>
        <taxon>Cyamopsis</taxon>
    </lineage>
</organism>